<comment type="function">
    <text evidence="1">Catalyzes the oxidation of 5,10-methylenetetrahydrofolate to 5,10-methenyltetrahydrofolate and then the hydrolysis of 5,10-methenyltetrahydrofolate to 10-formyltetrahydrofolate.</text>
</comment>
<comment type="catalytic activity">
    <reaction evidence="1">
        <text>(6R)-5,10-methylene-5,6,7,8-tetrahydrofolate + NADP(+) = (6R)-5,10-methenyltetrahydrofolate + NADPH</text>
        <dbReference type="Rhea" id="RHEA:22812"/>
        <dbReference type="ChEBI" id="CHEBI:15636"/>
        <dbReference type="ChEBI" id="CHEBI:57455"/>
        <dbReference type="ChEBI" id="CHEBI:57783"/>
        <dbReference type="ChEBI" id="CHEBI:58349"/>
        <dbReference type="EC" id="1.5.1.5"/>
    </reaction>
</comment>
<comment type="catalytic activity">
    <reaction evidence="1">
        <text>(6R)-5,10-methenyltetrahydrofolate + H2O = (6R)-10-formyltetrahydrofolate + H(+)</text>
        <dbReference type="Rhea" id="RHEA:23700"/>
        <dbReference type="ChEBI" id="CHEBI:15377"/>
        <dbReference type="ChEBI" id="CHEBI:15378"/>
        <dbReference type="ChEBI" id="CHEBI:57455"/>
        <dbReference type="ChEBI" id="CHEBI:195366"/>
        <dbReference type="EC" id="3.5.4.9"/>
    </reaction>
</comment>
<comment type="pathway">
    <text evidence="1">One-carbon metabolism; tetrahydrofolate interconversion.</text>
</comment>
<comment type="subunit">
    <text evidence="1">Homodimer.</text>
</comment>
<comment type="similarity">
    <text evidence="1">Belongs to the tetrahydrofolate dehydrogenase/cyclohydrolase family.</text>
</comment>
<accession>Q12A51</accession>
<feature type="chain" id="PRO_0000268432" description="Bifunctional protein FolD">
    <location>
        <begin position="1"/>
        <end position="281"/>
    </location>
</feature>
<feature type="binding site" evidence="1">
    <location>
        <begin position="165"/>
        <end position="167"/>
    </location>
    <ligand>
        <name>NADP(+)</name>
        <dbReference type="ChEBI" id="CHEBI:58349"/>
    </ligand>
</feature>
<feature type="binding site" evidence="1">
    <location>
        <position position="190"/>
    </location>
    <ligand>
        <name>NADP(+)</name>
        <dbReference type="ChEBI" id="CHEBI:58349"/>
    </ligand>
</feature>
<proteinExistence type="inferred from homology"/>
<keyword id="KW-0028">Amino-acid biosynthesis</keyword>
<keyword id="KW-0368">Histidine biosynthesis</keyword>
<keyword id="KW-0378">Hydrolase</keyword>
<keyword id="KW-0486">Methionine biosynthesis</keyword>
<keyword id="KW-0511">Multifunctional enzyme</keyword>
<keyword id="KW-0521">NADP</keyword>
<keyword id="KW-0554">One-carbon metabolism</keyword>
<keyword id="KW-0560">Oxidoreductase</keyword>
<keyword id="KW-0658">Purine biosynthesis</keyword>
<keyword id="KW-1185">Reference proteome</keyword>
<name>FOLD_POLSJ</name>
<dbReference type="EC" id="1.5.1.5" evidence="1"/>
<dbReference type="EC" id="3.5.4.9" evidence="1"/>
<dbReference type="EMBL" id="CP000316">
    <property type="protein sequence ID" value="ABE44591.1"/>
    <property type="molecule type" value="Genomic_DNA"/>
</dbReference>
<dbReference type="RefSeq" id="WP_011483589.1">
    <property type="nucleotide sequence ID" value="NC_007948.1"/>
</dbReference>
<dbReference type="SMR" id="Q12A51"/>
<dbReference type="STRING" id="296591.Bpro_2675"/>
<dbReference type="KEGG" id="pol:Bpro_2675"/>
<dbReference type="eggNOG" id="COG0190">
    <property type="taxonomic scope" value="Bacteria"/>
</dbReference>
<dbReference type="HOGENOM" id="CLU_034045_2_1_4"/>
<dbReference type="OrthoDB" id="9803580at2"/>
<dbReference type="UniPathway" id="UPA00193"/>
<dbReference type="Proteomes" id="UP000001983">
    <property type="component" value="Chromosome"/>
</dbReference>
<dbReference type="GO" id="GO:0005829">
    <property type="term" value="C:cytosol"/>
    <property type="evidence" value="ECO:0007669"/>
    <property type="project" value="TreeGrafter"/>
</dbReference>
<dbReference type="GO" id="GO:0004477">
    <property type="term" value="F:methenyltetrahydrofolate cyclohydrolase activity"/>
    <property type="evidence" value="ECO:0007669"/>
    <property type="project" value="UniProtKB-UniRule"/>
</dbReference>
<dbReference type="GO" id="GO:0004488">
    <property type="term" value="F:methylenetetrahydrofolate dehydrogenase (NADP+) activity"/>
    <property type="evidence" value="ECO:0007669"/>
    <property type="project" value="UniProtKB-UniRule"/>
</dbReference>
<dbReference type="GO" id="GO:0000105">
    <property type="term" value="P:L-histidine biosynthetic process"/>
    <property type="evidence" value="ECO:0007669"/>
    <property type="project" value="UniProtKB-KW"/>
</dbReference>
<dbReference type="GO" id="GO:0009086">
    <property type="term" value="P:methionine biosynthetic process"/>
    <property type="evidence" value="ECO:0007669"/>
    <property type="project" value="UniProtKB-KW"/>
</dbReference>
<dbReference type="GO" id="GO:0006164">
    <property type="term" value="P:purine nucleotide biosynthetic process"/>
    <property type="evidence" value="ECO:0007669"/>
    <property type="project" value="UniProtKB-KW"/>
</dbReference>
<dbReference type="GO" id="GO:0035999">
    <property type="term" value="P:tetrahydrofolate interconversion"/>
    <property type="evidence" value="ECO:0007669"/>
    <property type="project" value="UniProtKB-UniRule"/>
</dbReference>
<dbReference type="CDD" id="cd01080">
    <property type="entry name" value="NAD_bind_m-THF_DH_Cyclohyd"/>
    <property type="match status" value="1"/>
</dbReference>
<dbReference type="FunFam" id="3.40.50.720:FF:000094">
    <property type="entry name" value="Bifunctional protein FolD"/>
    <property type="match status" value="1"/>
</dbReference>
<dbReference type="FunFam" id="3.40.50.10860:FF:000005">
    <property type="entry name" value="C-1-tetrahydrofolate synthase, cytoplasmic, putative"/>
    <property type="match status" value="1"/>
</dbReference>
<dbReference type="Gene3D" id="3.40.50.10860">
    <property type="entry name" value="Leucine Dehydrogenase, chain A, domain 1"/>
    <property type="match status" value="1"/>
</dbReference>
<dbReference type="Gene3D" id="3.40.50.720">
    <property type="entry name" value="NAD(P)-binding Rossmann-like Domain"/>
    <property type="match status" value="1"/>
</dbReference>
<dbReference type="HAMAP" id="MF_01576">
    <property type="entry name" value="THF_DHG_CYH"/>
    <property type="match status" value="1"/>
</dbReference>
<dbReference type="InterPro" id="IPR046346">
    <property type="entry name" value="Aminoacid_DH-like_N_sf"/>
</dbReference>
<dbReference type="InterPro" id="IPR036291">
    <property type="entry name" value="NAD(P)-bd_dom_sf"/>
</dbReference>
<dbReference type="InterPro" id="IPR000672">
    <property type="entry name" value="THF_DH/CycHdrlase"/>
</dbReference>
<dbReference type="InterPro" id="IPR020630">
    <property type="entry name" value="THF_DH/CycHdrlase_cat_dom"/>
</dbReference>
<dbReference type="InterPro" id="IPR020867">
    <property type="entry name" value="THF_DH/CycHdrlase_CS"/>
</dbReference>
<dbReference type="InterPro" id="IPR020631">
    <property type="entry name" value="THF_DH/CycHdrlase_NAD-bd_dom"/>
</dbReference>
<dbReference type="NCBIfam" id="NF008058">
    <property type="entry name" value="PRK10792.1"/>
    <property type="match status" value="1"/>
</dbReference>
<dbReference type="NCBIfam" id="NF010783">
    <property type="entry name" value="PRK14186.1"/>
    <property type="match status" value="1"/>
</dbReference>
<dbReference type="NCBIfam" id="NF010786">
    <property type="entry name" value="PRK14189.1"/>
    <property type="match status" value="1"/>
</dbReference>
<dbReference type="PANTHER" id="PTHR48099:SF5">
    <property type="entry name" value="C-1-TETRAHYDROFOLATE SYNTHASE, CYTOPLASMIC"/>
    <property type="match status" value="1"/>
</dbReference>
<dbReference type="PANTHER" id="PTHR48099">
    <property type="entry name" value="C-1-TETRAHYDROFOLATE SYNTHASE, CYTOPLASMIC-RELATED"/>
    <property type="match status" value="1"/>
</dbReference>
<dbReference type="Pfam" id="PF00763">
    <property type="entry name" value="THF_DHG_CYH"/>
    <property type="match status" value="1"/>
</dbReference>
<dbReference type="Pfam" id="PF02882">
    <property type="entry name" value="THF_DHG_CYH_C"/>
    <property type="match status" value="1"/>
</dbReference>
<dbReference type="PRINTS" id="PR00085">
    <property type="entry name" value="THFDHDRGNASE"/>
</dbReference>
<dbReference type="SUPFAM" id="SSF53223">
    <property type="entry name" value="Aminoacid dehydrogenase-like, N-terminal domain"/>
    <property type="match status" value="1"/>
</dbReference>
<dbReference type="SUPFAM" id="SSF51735">
    <property type="entry name" value="NAD(P)-binding Rossmann-fold domains"/>
    <property type="match status" value="1"/>
</dbReference>
<dbReference type="PROSITE" id="PS00766">
    <property type="entry name" value="THF_DHG_CYH_1"/>
    <property type="match status" value="1"/>
</dbReference>
<dbReference type="PROSITE" id="PS00767">
    <property type="entry name" value="THF_DHG_CYH_2"/>
    <property type="match status" value="1"/>
</dbReference>
<reference key="1">
    <citation type="journal article" date="2008" name="Appl. Environ. Microbiol.">
        <title>The genome of Polaromonas sp. strain JS666: insights into the evolution of a hydrocarbon- and xenobiotic-degrading bacterium, and features of relevance to biotechnology.</title>
        <authorList>
            <person name="Mattes T.E."/>
            <person name="Alexander A.K."/>
            <person name="Richardson P.M."/>
            <person name="Munk A.C."/>
            <person name="Han C.S."/>
            <person name="Stothard P."/>
            <person name="Coleman N.V."/>
        </authorList>
    </citation>
    <scope>NUCLEOTIDE SEQUENCE [LARGE SCALE GENOMIC DNA]</scope>
    <source>
        <strain>JS666 / ATCC BAA-500</strain>
    </source>
</reference>
<evidence type="ECO:0000255" key="1">
    <source>
        <dbReference type="HAMAP-Rule" id="MF_01576"/>
    </source>
</evidence>
<protein>
    <recommendedName>
        <fullName evidence="1">Bifunctional protein FolD</fullName>
    </recommendedName>
    <domain>
        <recommendedName>
            <fullName evidence="1">Methylenetetrahydrofolate dehydrogenase</fullName>
            <ecNumber evidence="1">1.5.1.5</ecNumber>
        </recommendedName>
    </domain>
    <domain>
        <recommendedName>
            <fullName evidence="1">Methenyltetrahydrofolate cyclohydrolase</fullName>
            <ecNumber evidence="1">3.5.4.9</ecNumber>
        </recommendedName>
    </domain>
</protein>
<gene>
    <name evidence="1" type="primary">folD</name>
    <name type="ordered locus">Bpro_2675</name>
</gene>
<sequence length="281" mass="29700">MTAQLIDGNALSRQLRAEVARRAAALRARGITPGLAVVLVGENPASQVYVRNKVKACQDNGLHSVLEHYPAALSEAELLARVHALNNDPAIHGILVQLPLPAHIDAHKVIEAIAPGKDVDGFHVASAGALMVGQPGFWPCTPYGCMKMLESIGYDLRGKHAVVIGRSNIVGKPMAMMLLQKNATVTICHSATKDLKAMTLQADVIVAAVGKRNVLTADMVKPGAVVIDVGMNRNDEGKLCGDVDFEGVKEVAGYITPVPGGVGPMTITMLLVNTLESAERL</sequence>
<organism>
    <name type="scientific">Polaromonas sp. (strain JS666 / ATCC BAA-500)</name>
    <dbReference type="NCBI Taxonomy" id="296591"/>
    <lineage>
        <taxon>Bacteria</taxon>
        <taxon>Pseudomonadati</taxon>
        <taxon>Pseudomonadota</taxon>
        <taxon>Betaproteobacteria</taxon>
        <taxon>Burkholderiales</taxon>
        <taxon>Comamonadaceae</taxon>
        <taxon>Polaromonas</taxon>
    </lineage>
</organism>